<accession>P0DV55</accession>
<feature type="chain" id="PRO_0000455668" description="Protein Rv1078A">
    <location>
        <begin position="1"/>
        <end position="82"/>
    </location>
</feature>
<feature type="region of interest" description="Disordered" evidence="1">
    <location>
        <begin position="35"/>
        <end position="82"/>
    </location>
</feature>
<feature type="compositionally biased region" description="Basic residues" evidence="1">
    <location>
        <begin position="35"/>
        <end position="54"/>
    </location>
</feature>
<sequence length="82" mass="9527">MSHLPLHHPAAVVTLRPLRPRAAVATRLRRHRLAGGPTRRLRRRPAVTRRRRPDRRFVRCRPSPTRRGLPGCWRHSSTGPHT</sequence>
<gene>
    <name evidence="3" type="ordered locus">Rv1078A</name>
</gene>
<keyword id="KW-0963">Cytoplasm</keyword>
<keyword id="KW-0903">Direct protein sequencing</keyword>
<keyword id="KW-1185">Reference proteome</keyword>
<organism>
    <name type="scientific">Mycobacterium tuberculosis (strain ATCC 25618 / H37Rv)</name>
    <dbReference type="NCBI Taxonomy" id="83332"/>
    <lineage>
        <taxon>Bacteria</taxon>
        <taxon>Bacillati</taxon>
        <taxon>Actinomycetota</taxon>
        <taxon>Actinomycetes</taxon>
        <taxon>Mycobacteriales</taxon>
        <taxon>Mycobacteriaceae</taxon>
        <taxon>Mycobacterium</taxon>
        <taxon>Mycobacterium tuberculosis complex</taxon>
    </lineage>
</organism>
<evidence type="ECO:0000256" key="1">
    <source>
        <dbReference type="SAM" id="MobiDB-lite"/>
    </source>
</evidence>
<evidence type="ECO:0000269" key="2">
    <source>
    </source>
</evidence>
<evidence type="ECO:0000303" key="3">
    <source>
    </source>
</evidence>
<evidence type="ECO:0000305" key="4">
    <source>
    </source>
</evidence>
<protein>
    <recommendedName>
        <fullName evidence="3">Protein Rv1078A</fullName>
    </recommendedName>
</protein>
<name>Y1078_MYCTU</name>
<dbReference type="EMBL" id="AL123456">
    <property type="status" value="NOT_ANNOTATED_CDS"/>
    <property type="molecule type" value="Genomic_DNA"/>
</dbReference>
<dbReference type="TubercuList" id="Rv1078A"/>
<dbReference type="Proteomes" id="UP000001584">
    <property type="component" value="Chromosome"/>
</dbReference>
<dbReference type="GO" id="GO:0005737">
    <property type="term" value="C:cytoplasm"/>
    <property type="evidence" value="ECO:0007669"/>
    <property type="project" value="UniProtKB-SubCell"/>
</dbReference>
<reference key="1">
    <citation type="journal article" date="1998" name="Nature">
        <title>Deciphering the biology of Mycobacterium tuberculosis from the complete genome sequence.</title>
        <authorList>
            <person name="Cole S.T."/>
            <person name="Brosch R."/>
            <person name="Parkhill J."/>
            <person name="Garnier T."/>
            <person name="Churcher C.M."/>
            <person name="Harris D.E."/>
            <person name="Gordon S.V."/>
            <person name="Eiglmeier K."/>
            <person name="Gas S."/>
            <person name="Barry C.E. III"/>
            <person name="Tekaia F."/>
            <person name="Badcock K."/>
            <person name="Basham D."/>
            <person name="Brown D."/>
            <person name="Chillingworth T."/>
            <person name="Connor R."/>
            <person name="Davies R.M."/>
            <person name="Devlin K."/>
            <person name="Feltwell T."/>
            <person name="Gentles S."/>
            <person name="Hamlin N."/>
            <person name="Holroyd S."/>
            <person name="Hornsby T."/>
            <person name="Jagels K."/>
            <person name="Krogh A."/>
            <person name="McLean J."/>
            <person name="Moule S."/>
            <person name="Murphy L.D."/>
            <person name="Oliver S."/>
            <person name="Osborne J."/>
            <person name="Quail M.A."/>
            <person name="Rajandream M.A."/>
            <person name="Rogers J."/>
            <person name="Rutter S."/>
            <person name="Seeger K."/>
            <person name="Skelton S."/>
            <person name="Squares S."/>
            <person name="Squares R."/>
            <person name="Sulston J.E."/>
            <person name="Taylor K."/>
            <person name="Whitehead S."/>
            <person name="Barrell B.G."/>
        </authorList>
    </citation>
    <scope>NUCLEOTIDE SEQUENCE [LARGE SCALE GENOMIC DNA]</scope>
    <source>
        <strain>ATCC 25618 / H37Rv</strain>
    </source>
</reference>
<reference key="2">
    <citation type="journal article" date="2022" name="Genomics">
        <title>Deep N-terminomics of Mycobacterium tuberculosis H37Rv extensively correct annotated encoding genes.</title>
        <authorList>
            <person name="Shi J."/>
            <person name="Meng S."/>
            <person name="Wan L."/>
            <person name="Zhang Z."/>
            <person name="Jiang S."/>
            <person name="Zhu H."/>
            <person name="Dai E."/>
            <person name="Chang L."/>
            <person name="Gao H."/>
            <person name="Wan K."/>
            <person name="Zhang L."/>
            <person name="Zhao X."/>
            <person name="Liu H."/>
            <person name="Lyu Z."/>
            <person name="Zhang Y."/>
            <person name="Xu P."/>
        </authorList>
    </citation>
    <scope>IDENTIFICATION</scope>
    <scope>PROTEIN SEQUENCE OF 22-29</scope>
    <scope>PROBABLE SUBCELLULAR LOCATION</scope>
    <source>
        <strain>H37Rv</strain>
    </source>
</reference>
<comment type="subcellular location">
    <subcellularLocation>
        <location evidence="4">Cytoplasm</location>
    </subcellularLocation>
</comment>
<comment type="miscellaneous">
    <text evidence="2">Encoded entirely within Rv1078 (pra), on the same strand in another reading frame.</text>
</comment>
<proteinExistence type="evidence at protein level"/>